<feature type="signal peptide" evidence="3">
    <location>
        <begin position="1"/>
        <end position="25"/>
    </location>
</feature>
<feature type="propeptide" id="PRO_0000029112" evidence="1">
    <location>
        <begin position="26"/>
        <end position="222"/>
    </location>
</feature>
<feature type="chain" id="PRO_0000029113" description="Disintegrin and metalloproteinase domain-containing protein 22">
    <location>
        <begin position="223"/>
        <end position="906"/>
    </location>
</feature>
<feature type="topological domain" description="Extracellular" evidence="3">
    <location>
        <begin position="223"/>
        <end position="736"/>
    </location>
</feature>
<feature type="transmembrane region" description="Helical" evidence="3">
    <location>
        <begin position="737"/>
        <end position="757"/>
    </location>
</feature>
<feature type="topological domain" description="Cytoplasmic" evidence="3">
    <location>
        <begin position="758"/>
        <end position="906"/>
    </location>
</feature>
<feature type="domain" description="Peptidase M12B" evidence="5">
    <location>
        <begin position="239"/>
        <end position="438"/>
    </location>
</feature>
<feature type="domain" description="Disintegrin" evidence="4">
    <location>
        <begin position="444"/>
        <end position="531"/>
    </location>
</feature>
<feature type="domain" description="EGF-like">
    <location>
        <begin position="675"/>
        <end position="712"/>
    </location>
</feature>
<feature type="region of interest" description="Disordered" evidence="6">
    <location>
        <begin position="785"/>
        <end position="906"/>
    </location>
</feature>
<feature type="compositionally biased region" description="Low complexity" evidence="6">
    <location>
        <begin position="793"/>
        <end position="810"/>
    </location>
</feature>
<feature type="compositionally biased region" description="Basic and acidic residues" evidence="6">
    <location>
        <begin position="811"/>
        <end position="829"/>
    </location>
</feature>
<feature type="compositionally biased region" description="Basic residues" evidence="6">
    <location>
        <begin position="842"/>
        <end position="853"/>
    </location>
</feature>
<feature type="compositionally biased region" description="Low complexity" evidence="6">
    <location>
        <begin position="862"/>
        <end position="877"/>
    </location>
</feature>
<feature type="modified residue" description="Phosphoserine" evidence="2">
    <location>
        <position position="810"/>
    </location>
</feature>
<feature type="modified residue" description="Phosphoserine" evidence="18">
    <location>
        <position position="834"/>
    </location>
</feature>
<feature type="modified residue" description="Phosphoserine" evidence="2">
    <location>
        <position position="857"/>
    </location>
</feature>
<feature type="modified residue" description="Phosphoserine" evidence="2">
    <location>
        <position position="862"/>
    </location>
</feature>
<feature type="modified residue" description="Phosphoserine" evidence="2">
    <location>
        <position position="866"/>
    </location>
</feature>
<feature type="modified residue" description="Phosphoserine" evidence="2">
    <location>
        <position position="870"/>
    </location>
</feature>
<feature type="glycosylation site" description="N-linked (GlcNAc...) asparagine" evidence="3">
    <location>
        <position position="175"/>
    </location>
</feature>
<feature type="glycosylation site" description="N-linked (GlcNAc...) asparagine" evidence="11">
    <location>
        <position position="519"/>
    </location>
</feature>
<feature type="glycosylation site" description="N-linked (GlcNAc...) asparagine" evidence="11">
    <location>
        <position position="634"/>
    </location>
</feature>
<feature type="glycosylation site" description="N-linked (GlcNAc...) asparagine" evidence="11">
    <location>
        <position position="675"/>
    </location>
</feature>
<feature type="disulfide bond" evidence="11">
    <location>
        <begin position="349"/>
        <end position="433"/>
    </location>
</feature>
<feature type="disulfide bond" evidence="11">
    <location>
        <begin position="392"/>
        <end position="417"/>
    </location>
</feature>
<feature type="disulfide bond" evidence="11">
    <location>
        <begin position="394"/>
        <end position="401"/>
    </location>
</feature>
<feature type="disulfide bond" evidence="11">
    <location>
        <begin position="447"/>
        <end position="477"/>
    </location>
</feature>
<feature type="disulfide bond" evidence="11">
    <location>
        <begin position="458"/>
        <end position="474"/>
    </location>
</feature>
<feature type="disulfide bond" evidence="11">
    <location>
        <begin position="460"/>
        <end position="466"/>
    </location>
</feature>
<feature type="disulfide bond" evidence="11">
    <location>
        <begin position="473"/>
        <end position="494"/>
    </location>
</feature>
<feature type="disulfide bond" evidence="11">
    <location>
        <begin position="485"/>
        <end position="491"/>
    </location>
</feature>
<feature type="disulfide bond" evidence="11">
    <location>
        <begin position="490"/>
        <end position="516"/>
    </location>
</feature>
<feature type="disulfide bond" evidence="11">
    <location>
        <begin position="503"/>
        <end position="523"/>
    </location>
</feature>
<feature type="disulfide bond" evidence="11">
    <location>
        <begin position="510"/>
        <end position="542"/>
    </location>
</feature>
<feature type="disulfide bond" evidence="11">
    <location>
        <begin position="535"/>
        <end position="547"/>
    </location>
</feature>
<feature type="disulfide bond" evidence="11">
    <location>
        <begin position="554"/>
        <end position="605"/>
    </location>
</feature>
<feature type="disulfide bond" evidence="11">
    <location>
        <begin position="569"/>
        <end position="635"/>
    </location>
</feature>
<feature type="disulfide bond" evidence="11">
    <location>
        <begin position="583"/>
        <end position="593"/>
    </location>
</feature>
<feature type="disulfide bond" evidence="11">
    <location>
        <begin position="600"/>
        <end position="663"/>
    </location>
</feature>
<feature type="disulfide bond" evidence="11">
    <location>
        <begin position="657"/>
        <end position="668"/>
    </location>
</feature>
<feature type="disulfide bond" evidence="11">
    <location>
        <begin position="679"/>
        <end position="694"/>
    </location>
</feature>
<feature type="disulfide bond" evidence="11">
    <location>
        <begin position="688"/>
        <end position="700"/>
    </location>
</feature>
<feature type="disulfide bond" evidence="11">
    <location>
        <begin position="702"/>
        <end position="711"/>
    </location>
</feature>
<feature type="splice variant" id="VSP_005482" description="In isoform 2, isoform 4 and isoform 5." evidence="14 15 16">
    <location>
        <begin position="768"/>
        <end position="803"/>
    </location>
</feature>
<feature type="splice variant" id="VSP_005484" description="In isoform 2." evidence="14">
    <original>E</original>
    <variation>EYLNPWFKRDYNVAKWVEDVNKNTEGPYFR</variation>
    <location>
        <position position="859"/>
    </location>
</feature>
<feature type="splice variant" id="VSP_005483" description="In isoform 3 and isoform 4." evidence="15">
    <location>
        <begin position="860"/>
        <end position="906"/>
    </location>
</feature>
<feature type="sequence variant" id="VAR_020057" description="In dbSNP:rs2279542." evidence="7 13">
    <original>P</original>
    <variation>R</variation>
    <location>
        <position position="81"/>
    </location>
</feature>
<feature type="sequence variant" id="VAR_051589" description="In dbSNP:rs4728730.">
    <original>H</original>
    <variation>Y</variation>
    <location>
        <position position="119"/>
    </location>
</feature>
<feature type="sequence variant" id="VAR_051590" description="In dbSNP:rs17255978.">
    <original>V</original>
    <variation>I</variation>
    <location>
        <position position="207"/>
    </location>
</feature>
<feature type="sequence variant" id="VAR_080496" description="In DEE61; uncertain significance; loss of interaction with LGI1; no effect on DLG4-binding, nor on subcellular location; dbSNP:rs747259064." evidence="12">
    <original>C</original>
    <variation>Y</variation>
    <location>
        <position position="401"/>
    </location>
</feature>
<feature type="mutagenesis site" description="Abolishes interactions with YWHAB and YWHAZ; when associated with A-857." evidence="8 9">
    <original>S</original>
    <variation>A</variation>
    <location>
        <position position="834"/>
    </location>
</feature>
<feature type="mutagenesis site" description="Abolishes interactions with YWHAB and YWHAZ; when associated with A-834." evidence="8 9">
    <original>S</original>
    <variation>A</variation>
    <location>
        <position position="857"/>
    </location>
</feature>
<feature type="strand" evidence="19">
    <location>
        <begin position="235"/>
        <end position="237"/>
    </location>
</feature>
<feature type="strand" evidence="19">
    <location>
        <begin position="239"/>
        <end position="247"/>
    </location>
</feature>
<feature type="helix" evidence="19">
    <location>
        <begin position="249"/>
        <end position="253"/>
    </location>
</feature>
<feature type="turn" evidence="19">
    <location>
        <begin position="254"/>
        <end position="257"/>
    </location>
</feature>
<feature type="helix" evidence="19">
    <location>
        <begin position="259"/>
        <end position="280"/>
    </location>
</feature>
<feature type="strand" evidence="19">
    <location>
        <begin position="281"/>
        <end position="292"/>
    </location>
</feature>
<feature type="strand" evidence="21">
    <location>
        <begin position="294"/>
        <end position="296"/>
    </location>
</feature>
<feature type="helix" evidence="19">
    <location>
        <begin position="305"/>
        <end position="318"/>
    </location>
</feature>
<feature type="strand" evidence="19">
    <location>
        <begin position="325"/>
        <end position="333"/>
    </location>
</feature>
<feature type="strand" evidence="19">
    <location>
        <begin position="336"/>
        <end position="338"/>
    </location>
</feature>
<feature type="strand" evidence="19">
    <location>
        <begin position="341"/>
        <end position="343"/>
    </location>
</feature>
<feature type="turn" evidence="19">
    <location>
        <begin position="351"/>
        <end position="353"/>
    </location>
</feature>
<feature type="strand" evidence="19">
    <location>
        <begin position="354"/>
        <end position="359"/>
    </location>
</feature>
<feature type="helix" evidence="19">
    <location>
        <begin position="363"/>
        <end position="378"/>
    </location>
</feature>
<feature type="helix" evidence="19">
    <location>
        <begin position="384"/>
        <end position="389"/>
    </location>
</feature>
<feature type="strand" evidence="21">
    <location>
        <begin position="390"/>
        <end position="392"/>
    </location>
</feature>
<feature type="strand" evidence="20">
    <location>
        <begin position="397"/>
        <end position="399"/>
    </location>
</feature>
<feature type="helix" evidence="19">
    <location>
        <begin position="416"/>
        <end position="427"/>
    </location>
</feature>
<feature type="helix" evidence="19">
    <location>
        <begin position="432"/>
        <end position="435"/>
    </location>
</feature>
<feature type="strand" evidence="21">
    <location>
        <begin position="449"/>
        <end position="451"/>
    </location>
</feature>
<feature type="helix" evidence="19">
    <location>
        <begin position="463"/>
        <end position="466"/>
    </location>
</feature>
<feature type="turn" evidence="19">
    <location>
        <begin position="467"/>
        <end position="473"/>
    </location>
</feature>
<feature type="strand" evidence="20">
    <location>
        <begin position="474"/>
        <end position="479"/>
    </location>
</feature>
<feature type="strand" evidence="19">
    <location>
        <begin position="486"/>
        <end position="488"/>
    </location>
</feature>
<feature type="strand" evidence="19">
    <location>
        <begin position="491"/>
        <end position="496"/>
    </location>
</feature>
<feature type="strand" evidence="19">
    <location>
        <begin position="502"/>
        <end position="504"/>
    </location>
</feature>
<feature type="strand" evidence="21">
    <location>
        <begin position="507"/>
        <end position="511"/>
    </location>
</feature>
<feature type="turn" evidence="19">
    <location>
        <begin position="536"/>
        <end position="539"/>
    </location>
</feature>
<feature type="strand" evidence="19">
    <location>
        <begin position="540"/>
        <end position="543"/>
    </location>
</feature>
<feature type="strand" evidence="19">
    <location>
        <begin position="546"/>
        <end position="548"/>
    </location>
</feature>
<feature type="helix" evidence="19">
    <location>
        <begin position="550"/>
        <end position="558"/>
    </location>
</feature>
<feature type="helix" evidence="19">
    <location>
        <begin position="567"/>
        <end position="573"/>
    </location>
</feature>
<feature type="turn" evidence="19">
    <location>
        <begin position="574"/>
        <end position="576"/>
    </location>
</feature>
<feature type="strand" evidence="21">
    <location>
        <begin position="578"/>
        <end position="581"/>
    </location>
</feature>
<feature type="strand" evidence="19">
    <location>
        <begin position="585"/>
        <end position="590"/>
    </location>
</feature>
<feature type="helix" evidence="19">
    <location>
        <begin position="595"/>
        <end position="597"/>
    </location>
</feature>
<feature type="strand" evidence="19">
    <location>
        <begin position="600"/>
        <end position="602"/>
    </location>
</feature>
<feature type="strand" evidence="19">
    <location>
        <begin position="605"/>
        <end position="607"/>
    </location>
</feature>
<feature type="strand" evidence="19">
    <location>
        <begin position="613"/>
        <end position="617"/>
    </location>
</feature>
<feature type="strand" evidence="19">
    <location>
        <begin position="622"/>
        <end position="628"/>
    </location>
</feature>
<feature type="strand" evidence="19">
    <location>
        <begin position="631"/>
        <end position="637"/>
    </location>
</feature>
<feature type="strand" evidence="19">
    <location>
        <begin position="640"/>
        <end position="645"/>
    </location>
</feature>
<feature type="strand" evidence="22">
    <location>
        <begin position="646"/>
        <end position="648"/>
    </location>
</feature>
<feature type="strand" evidence="19">
    <location>
        <begin position="656"/>
        <end position="658"/>
    </location>
</feature>
<feature type="strand" evidence="19">
    <location>
        <begin position="661"/>
        <end position="666"/>
    </location>
</feature>
<feature type="strand" evidence="19">
    <location>
        <begin position="668"/>
        <end position="670"/>
    </location>
</feature>
<feature type="helix" evidence="19">
    <location>
        <begin position="671"/>
        <end position="674"/>
    </location>
</feature>
<feature type="helix" evidence="19">
    <location>
        <begin position="688"/>
        <end position="690"/>
    </location>
</feature>
<feature type="strand" evidence="19">
    <location>
        <begin position="692"/>
        <end position="695"/>
    </location>
</feature>
<feature type="strand" evidence="19">
    <location>
        <begin position="700"/>
        <end position="702"/>
    </location>
</feature>
<feature type="strand" evidence="19">
    <location>
        <begin position="706"/>
        <end position="708"/>
    </location>
</feature>
<feature type="sequence conflict" description="In Ref. 2; AAF73288." evidence="17" ref="2">
    <original>G</original>
    <variation>E</variation>
    <location sequence="Q9P0K1-2">
        <position position="848"/>
    </location>
</feature>
<accession>Q9P0K1</accession>
<accession>O75075</accession>
<accession>O75076</accession>
<accession>Q9P0K2</accession>
<accession>Q9UIA1</accession>
<accession>Q9UKK2</accession>
<name>ADA22_HUMAN</name>
<gene>
    <name type="primary">ADAM22</name>
    <name type="synonym">MDC2</name>
</gene>
<dbReference type="EMBL" id="AB009671">
    <property type="protein sequence ID" value="BAA32349.1"/>
    <property type="molecule type" value="mRNA"/>
</dbReference>
<dbReference type="EMBL" id="AB009671">
    <property type="protein sequence ID" value="BAA32350.1"/>
    <property type="molecule type" value="mRNA"/>
</dbReference>
<dbReference type="EMBL" id="AF155381">
    <property type="protein sequence ID" value="AAF73288.1"/>
    <property type="molecule type" value="mRNA"/>
</dbReference>
<dbReference type="EMBL" id="AF155382">
    <property type="protein sequence ID" value="AAF73289.1"/>
    <property type="molecule type" value="mRNA"/>
</dbReference>
<dbReference type="EMBL" id="AF073291">
    <property type="protein sequence ID" value="AAF22476.2"/>
    <property type="molecule type" value="mRNA"/>
</dbReference>
<dbReference type="EMBL" id="AC005075">
    <property type="status" value="NOT_ANNOTATED_CDS"/>
    <property type="molecule type" value="Genomic_DNA"/>
</dbReference>
<dbReference type="EMBL" id="AF158637">
    <property type="protein sequence ID" value="AAD55251.1"/>
    <property type="molecule type" value="mRNA"/>
</dbReference>
<dbReference type="CCDS" id="CCDS43608.1">
    <molecule id="Q9P0K1-2"/>
</dbReference>
<dbReference type="CCDS" id="CCDS43609.1">
    <molecule id="Q9P0K1-5"/>
</dbReference>
<dbReference type="CCDS" id="CCDS43610.1">
    <molecule id="Q9P0K1-3"/>
</dbReference>
<dbReference type="CCDS" id="CCDS47637.1">
    <molecule id="Q9P0K1-1"/>
</dbReference>
<dbReference type="CCDS" id="CCDS94138.1">
    <molecule id="Q9P0K1-4"/>
</dbReference>
<dbReference type="RefSeq" id="NP_004185.1">
    <molecule id="Q9P0K1-3"/>
    <property type="nucleotide sequence ID" value="NM_004194.5"/>
</dbReference>
<dbReference type="RefSeq" id="NP_068367.1">
    <molecule id="Q9P0K1-4"/>
    <property type="nucleotide sequence ID" value="NM_021721.5"/>
</dbReference>
<dbReference type="RefSeq" id="NP_068368.2">
    <molecule id="Q9P0K1-2"/>
    <property type="nucleotide sequence ID" value="NM_021722.5"/>
</dbReference>
<dbReference type="RefSeq" id="NP_068369.1">
    <molecule id="Q9P0K1-1"/>
    <property type="nucleotide sequence ID" value="NM_021723.5"/>
</dbReference>
<dbReference type="PDB" id="3G5C">
    <property type="method" value="X-ray"/>
    <property type="resolution" value="2.36 A"/>
    <property type="chains" value="A/B=233-736"/>
</dbReference>
<dbReference type="PDB" id="5Y2Z">
    <property type="method" value="X-ray"/>
    <property type="resolution" value="2.67 A"/>
    <property type="chains" value="A/C/E/G/I/K=233-729"/>
</dbReference>
<dbReference type="PDB" id="5Y31">
    <property type="method" value="X-ray"/>
    <property type="resolution" value="7.12 A"/>
    <property type="chains" value="A/C=233-729"/>
</dbReference>
<dbReference type="PDB" id="7CQF">
    <property type="method" value="X-ray"/>
    <property type="resolution" value="1.80 A"/>
    <property type="chains" value="A=892-906"/>
</dbReference>
<dbReference type="PDB" id="8HPY">
    <property type="method" value="X-ray"/>
    <property type="resolution" value="5.87 A"/>
    <property type="chains" value="A/B=233-718"/>
</dbReference>
<dbReference type="PDB" id="8HQ1">
    <property type="method" value="X-ray"/>
    <property type="resolution" value="4.17 A"/>
    <property type="chains" value="A/B/C=233-718"/>
</dbReference>
<dbReference type="PDB" id="8HQ2">
    <property type="method" value="X-ray"/>
    <property type="resolution" value="2.93 A"/>
    <property type="chains" value="A/B=233-718"/>
</dbReference>
<dbReference type="PDB" id="8Y6B">
    <property type="method" value="X-ray"/>
    <property type="resolution" value="3.49 A"/>
    <property type="chains" value="A/B/C=233-718"/>
</dbReference>
<dbReference type="PDBsum" id="3G5C"/>
<dbReference type="PDBsum" id="5Y2Z"/>
<dbReference type="PDBsum" id="5Y31"/>
<dbReference type="PDBsum" id="7CQF"/>
<dbReference type="PDBsum" id="8HPY"/>
<dbReference type="PDBsum" id="8HQ1"/>
<dbReference type="PDBsum" id="8HQ2"/>
<dbReference type="PDBsum" id="8Y6B"/>
<dbReference type="SMR" id="Q9P0K1"/>
<dbReference type="BioGRID" id="119789">
    <property type="interactions" value="30"/>
</dbReference>
<dbReference type="CORUM" id="Q9P0K1"/>
<dbReference type="ELM" id="Q9P0K1"/>
<dbReference type="FunCoup" id="Q9P0K1">
    <property type="interactions" value="773"/>
</dbReference>
<dbReference type="IntAct" id="Q9P0K1">
    <property type="interactions" value="24"/>
</dbReference>
<dbReference type="MINT" id="Q9P0K1"/>
<dbReference type="STRING" id="9606.ENSP00000265727"/>
<dbReference type="MEROPS" id="M12.978"/>
<dbReference type="GlyCosmos" id="Q9P0K1">
    <property type="glycosylation" value="4 sites, No reported glycans"/>
</dbReference>
<dbReference type="GlyGen" id="Q9P0K1">
    <property type="glycosylation" value="5 sites, 9 N-linked glycans (3 sites)"/>
</dbReference>
<dbReference type="iPTMnet" id="Q9P0K1"/>
<dbReference type="PhosphoSitePlus" id="Q9P0K1"/>
<dbReference type="BioMuta" id="ADAM22"/>
<dbReference type="DMDM" id="14423634"/>
<dbReference type="jPOST" id="Q9P0K1"/>
<dbReference type="MassIVE" id="Q9P0K1"/>
<dbReference type="PaxDb" id="9606-ENSP00000265727"/>
<dbReference type="PeptideAtlas" id="Q9P0K1"/>
<dbReference type="ProteomicsDB" id="83556">
    <molecule id="Q9P0K1-1"/>
</dbReference>
<dbReference type="ProteomicsDB" id="83557">
    <molecule id="Q9P0K1-2"/>
</dbReference>
<dbReference type="ProteomicsDB" id="83558">
    <molecule id="Q9P0K1-3"/>
</dbReference>
<dbReference type="ProteomicsDB" id="83559">
    <molecule id="Q9P0K1-4"/>
</dbReference>
<dbReference type="ProteomicsDB" id="83560">
    <molecule id="Q9P0K1-5"/>
</dbReference>
<dbReference type="Pumba" id="Q9P0K1"/>
<dbReference type="Antibodypedia" id="29782">
    <property type="antibodies" value="312 antibodies from 27 providers"/>
</dbReference>
<dbReference type="DNASU" id="53616"/>
<dbReference type="Ensembl" id="ENST00000265727.11">
    <molecule id="Q9P0K1-1"/>
    <property type="protein sequence ID" value="ENSP00000265727.7"/>
    <property type="gene ID" value="ENSG00000008277.15"/>
</dbReference>
<dbReference type="Ensembl" id="ENST00000398201.8">
    <molecule id="Q9P0K1-3"/>
    <property type="protein sequence ID" value="ENSP00000381260.4"/>
    <property type="gene ID" value="ENSG00000008277.15"/>
</dbReference>
<dbReference type="Ensembl" id="ENST00000398204.8">
    <molecule id="Q9P0K1-5"/>
    <property type="protein sequence ID" value="ENSP00000381262.4"/>
    <property type="gene ID" value="ENSG00000008277.15"/>
</dbReference>
<dbReference type="Ensembl" id="ENST00000398209.7">
    <molecule id="Q9P0K1-2"/>
    <property type="protein sequence ID" value="ENSP00000381267.3"/>
    <property type="gene ID" value="ENSG00000008277.15"/>
</dbReference>
<dbReference type="Ensembl" id="ENST00000684002.1">
    <molecule id="Q9P0K1-4"/>
    <property type="protein sequence ID" value="ENSP00000508320.1"/>
    <property type="gene ID" value="ENSG00000008277.15"/>
</dbReference>
<dbReference type="GeneID" id="53616"/>
<dbReference type="KEGG" id="hsa:53616"/>
<dbReference type="UCSC" id="uc003ujk.3">
    <molecule id="Q9P0K1-1"/>
    <property type="organism name" value="human"/>
</dbReference>
<dbReference type="AGR" id="HGNC:201"/>
<dbReference type="CTD" id="53616"/>
<dbReference type="DisGeNET" id="53616"/>
<dbReference type="GeneCards" id="ADAM22"/>
<dbReference type="HGNC" id="HGNC:201">
    <property type="gene designation" value="ADAM22"/>
</dbReference>
<dbReference type="HPA" id="ENSG00000008277">
    <property type="expression patterns" value="Tissue enriched (brain)"/>
</dbReference>
<dbReference type="MalaCards" id="ADAM22"/>
<dbReference type="MIM" id="603709">
    <property type="type" value="gene"/>
</dbReference>
<dbReference type="MIM" id="617933">
    <property type="type" value="phenotype"/>
</dbReference>
<dbReference type="neXtProt" id="NX_Q9P0K1"/>
<dbReference type="OpenTargets" id="ENSG00000008277"/>
<dbReference type="PharmGKB" id="PA24518"/>
<dbReference type="VEuPathDB" id="HostDB:ENSG00000008277"/>
<dbReference type="eggNOG" id="KOG3607">
    <property type="taxonomic scope" value="Eukaryota"/>
</dbReference>
<dbReference type="GeneTree" id="ENSGT00940000156889"/>
<dbReference type="InParanoid" id="Q9P0K1"/>
<dbReference type="OMA" id="TAWGYNM"/>
<dbReference type="OrthoDB" id="5951731at2759"/>
<dbReference type="PAN-GO" id="Q9P0K1">
    <property type="GO annotations" value="1 GO annotation based on evolutionary models"/>
</dbReference>
<dbReference type="PhylomeDB" id="Q9P0K1"/>
<dbReference type="TreeFam" id="TF314733"/>
<dbReference type="PathwayCommons" id="Q9P0K1"/>
<dbReference type="Reactome" id="R-HSA-5682910">
    <property type="pathway name" value="LGI-ADAM interactions"/>
</dbReference>
<dbReference type="SignaLink" id="Q9P0K1"/>
<dbReference type="BioGRID-ORCS" id="53616">
    <property type="hits" value="8 hits in 1150 CRISPR screens"/>
</dbReference>
<dbReference type="CD-CODE" id="FB4E32DD">
    <property type="entry name" value="Presynaptic clusters and postsynaptic densities"/>
</dbReference>
<dbReference type="ChiTaRS" id="ADAM22">
    <property type="organism name" value="human"/>
</dbReference>
<dbReference type="EvolutionaryTrace" id="Q9P0K1"/>
<dbReference type="GeneWiki" id="ADAM22"/>
<dbReference type="GenomeRNAi" id="53616"/>
<dbReference type="Pharos" id="Q9P0K1">
    <property type="development level" value="Tbio"/>
</dbReference>
<dbReference type="PRO" id="PR:Q9P0K1"/>
<dbReference type="Proteomes" id="UP000005640">
    <property type="component" value="Chromosome 7"/>
</dbReference>
<dbReference type="RNAct" id="Q9P0K1">
    <property type="molecule type" value="protein"/>
</dbReference>
<dbReference type="Bgee" id="ENSG00000008277">
    <property type="expression patterns" value="Expressed in lateral nuclear group of thalamus and 157 other cell types or tissues"/>
</dbReference>
<dbReference type="ExpressionAtlas" id="Q9P0K1">
    <property type="expression patterns" value="baseline and differential"/>
</dbReference>
<dbReference type="GO" id="GO:0030424">
    <property type="term" value="C:axon"/>
    <property type="evidence" value="ECO:0000250"/>
    <property type="project" value="UniProtKB"/>
</dbReference>
<dbReference type="GO" id="GO:0016020">
    <property type="term" value="C:membrane"/>
    <property type="evidence" value="ECO:0000250"/>
    <property type="project" value="UniProtKB"/>
</dbReference>
<dbReference type="GO" id="GO:0005886">
    <property type="term" value="C:plasma membrane"/>
    <property type="evidence" value="ECO:0000314"/>
    <property type="project" value="UniProtKB"/>
</dbReference>
<dbReference type="GO" id="GO:0098839">
    <property type="term" value="C:postsynaptic density membrane"/>
    <property type="evidence" value="ECO:0000318"/>
    <property type="project" value="GO_Central"/>
</dbReference>
<dbReference type="GO" id="GO:0005178">
    <property type="term" value="F:integrin binding"/>
    <property type="evidence" value="ECO:0000303"/>
    <property type="project" value="UniProtKB"/>
</dbReference>
<dbReference type="GO" id="GO:0004222">
    <property type="term" value="F:metalloendopeptidase activity"/>
    <property type="evidence" value="ECO:0000318"/>
    <property type="project" value="GO_Central"/>
</dbReference>
<dbReference type="GO" id="GO:0007155">
    <property type="term" value="P:cell adhesion"/>
    <property type="evidence" value="ECO:0007669"/>
    <property type="project" value="UniProtKB-KW"/>
</dbReference>
<dbReference type="GO" id="GO:0007417">
    <property type="term" value="P:central nervous system development"/>
    <property type="evidence" value="ECO:0000304"/>
    <property type="project" value="ProtInc"/>
</dbReference>
<dbReference type="GO" id="GO:0007162">
    <property type="term" value="P:negative regulation of cell adhesion"/>
    <property type="evidence" value="ECO:0000303"/>
    <property type="project" value="UniProtKB"/>
</dbReference>
<dbReference type="GO" id="GO:0006508">
    <property type="term" value="P:proteolysis"/>
    <property type="evidence" value="ECO:0000318"/>
    <property type="project" value="GO_Central"/>
</dbReference>
<dbReference type="CDD" id="cd04269">
    <property type="entry name" value="ZnMc_adamalysin_II_like"/>
    <property type="match status" value="1"/>
</dbReference>
<dbReference type="FunFam" id="3.40.390.10:FF:000014">
    <property type="entry name" value="disintegrin and metalloproteinase domain-containing protein 11"/>
    <property type="match status" value="1"/>
</dbReference>
<dbReference type="FunFam" id="4.10.70.10:FF:000001">
    <property type="entry name" value="Disintegrin and metalloproteinase domain-containing protein 22"/>
    <property type="match status" value="1"/>
</dbReference>
<dbReference type="Gene3D" id="3.40.390.10">
    <property type="entry name" value="Collagenase (Catalytic Domain)"/>
    <property type="match status" value="1"/>
</dbReference>
<dbReference type="Gene3D" id="4.10.70.10">
    <property type="entry name" value="Disintegrin domain"/>
    <property type="match status" value="1"/>
</dbReference>
<dbReference type="Gene3D" id="2.10.25.10">
    <property type="entry name" value="Laminin"/>
    <property type="match status" value="1"/>
</dbReference>
<dbReference type="InterPro" id="IPR006586">
    <property type="entry name" value="ADAM_Cys-rich"/>
</dbReference>
<dbReference type="InterPro" id="IPR018358">
    <property type="entry name" value="Disintegrin_CS"/>
</dbReference>
<dbReference type="InterPro" id="IPR001762">
    <property type="entry name" value="Disintegrin_dom"/>
</dbReference>
<dbReference type="InterPro" id="IPR036436">
    <property type="entry name" value="Disintegrin_dom_sf"/>
</dbReference>
<dbReference type="InterPro" id="IPR000742">
    <property type="entry name" value="EGF-like_dom"/>
</dbReference>
<dbReference type="InterPro" id="IPR013111">
    <property type="entry name" value="EGF_extracell"/>
</dbReference>
<dbReference type="InterPro" id="IPR024079">
    <property type="entry name" value="MetalloPept_cat_dom_sf"/>
</dbReference>
<dbReference type="InterPro" id="IPR001590">
    <property type="entry name" value="Peptidase_M12B"/>
</dbReference>
<dbReference type="InterPro" id="IPR002870">
    <property type="entry name" value="Peptidase_M12B_N"/>
</dbReference>
<dbReference type="InterPro" id="IPR034027">
    <property type="entry name" value="Reprolysin_adamalysin"/>
</dbReference>
<dbReference type="PANTHER" id="PTHR11905">
    <property type="entry name" value="ADAM A DISINTEGRIN AND METALLOPROTEASE DOMAIN"/>
    <property type="match status" value="1"/>
</dbReference>
<dbReference type="PANTHER" id="PTHR11905:SF14">
    <property type="entry name" value="DISINTEGRIN AND METALLOPROTEINASE DOMAIN-CONTAINING PROTEIN 22"/>
    <property type="match status" value="1"/>
</dbReference>
<dbReference type="Pfam" id="PF08516">
    <property type="entry name" value="ADAM_CR"/>
    <property type="match status" value="1"/>
</dbReference>
<dbReference type="Pfam" id="PF00200">
    <property type="entry name" value="Disintegrin"/>
    <property type="match status" value="1"/>
</dbReference>
<dbReference type="Pfam" id="PF07974">
    <property type="entry name" value="EGF_2"/>
    <property type="match status" value="1"/>
</dbReference>
<dbReference type="Pfam" id="PF01562">
    <property type="entry name" value="Pep_M12B_propep"/>
    <property type="match status" value="1"/>
</dbReference>
<dbReference type="Pfam" id="PF01421">
    <property type="entry name" value="Reprolysin"/>
    <property type="match status" value="1"/>
</dbReference>
<dbReference type="PRINTS" id="PR00289">
    <property type="entry name" value="DISINTEGRIN"/>
</dbReference>
<dbReference type="SMART" id="SM00608">
    <property type="entry name" value="ACR"/>
    <property type="match status" value="1"/>
</dbReference>
<dbReference type="SMART" id="SM00050">
    <property type="entry name" value="DISIN"/>
    <property type="match status" value="1"/>
</dbReference>
<dbReference type="SUPFAM" id="SSF57552">
    <property type="entry name" value="Blood coagulation inhibitor (disintegrin)"/>
    <property type="match status" value="1"/>
</dbReference>
<dbReference type="SUPFAM" id="SSF55486">
    <property type="entry name" value="Metalloproteases ('zincins'), catalytic domain"/>
    <property type="match status" value="1"/>
</dbReference>
<dbReference type="PROSITE" id="PS50215">
    <property type="entry name" value="ADAM_MEPRO"/>
    <property type="match status" value="1"/>
</dbReference>
<dbReference type="PROSITE" id="PS00427">
    <property type="entry name" value="DISINTEGRIN_1"/>
    <property type="match status" value="1"/>
</dbReference>
<dbReference type="PROSITE" id="PS50214">
    <property type="entry name" value="DISINTEGRIN_2"/>
    <property type="match status" value="1"/>
</dbReference>
<dbReference type="PROSITE" id="PS00022">
    <property type="entry name" value="EGF_1"/>
    <property type="match status" value="1"/>
</dbReference>
<keyword id="KW-0002">3D-structure</keyword>
<keyword id="KW-0025">Alternative splicing</keyword>
<keyword id="KW-0130">Cell adhesion</keyword>
<keyword id="KW-1003">Cell membrane</keyword>
<keyword id="KW-0966">Cell projection</keyword>
<keyword id="KW-0165">Cleavage on pair of basic residues</keyword>
<keyword id="KW-0225">Disease variant</keyword>
<keyword id="KW-1015">Disulfide bond</keyword>
<keyword id="KW-0245">EGF-like domain</keyword>
<keyword id="KW-0887">Epilepsy</keyword>
<keyword id="KW-0325">Glycoprotein</keyword>
<keyword id="KW-0472">Membrane</keyword>
<keyword id="KW-0597">Phosphoprotein</keyword>
<keyword id="KW-1267">Proteomics identification</keyword>
<keyword id="KW-0675">Receptor</keyword>
<keyword id="KW-1185">Reference proteome</keyword>
<keyword id="KW-0732">Signal</keyword>
<keyword id="KW-0812">Transmembrane</keyword>
<keyword id="KW-1133">Transmembrane helix</keyword>
<sequence>MQAAVAVSVPFLLLCVLGTCPPARCGQAGDASLMELEKRKENRFVERQSIVPLRLIYRSGGEDESRHDALDTRVRGDLGGPQLTHVDQASFQVDAFGTSFILDVVLNHDLLSSEYIERHIEHGGKTVEVKGGEHCYYQGHIRGNPDSFVALSTCHGLHGMFYDGNHTYLIEPEENDTTQEDFHFHSVYKSRLFEFSLDDLPSEFQQVNITPSKFILKPRPKRSKRQLRRYPRNVEEETKYIELMIVNDHLMFKKHRLSVVHTNTYAKSVVNMADLIYKDQLKTRIVLVAMETWATDNKFAISENPLITLREFMKYRRDFIKEKSDAVHLFSGSQFESSRSGAAYIGGICSLLKGGGVNEFGKTDLMAVTLAQSLAHNIGIISDKRKLASGECKCEDTWSGCIMGDTGYYLPKKFTQCNIEEYHDFLNSGGGACLFNKPSKLLDPPECGNGFIETGEECDCGTPAECVLEGAECCKKCTLTQDSQCSDGLCCKKCKFQPMGTVCREAVNDCDIRETCSGNSSQCAPNIHKMDGYSCDGVQGICFGGRCKTRDRQCKYIWGQKVTASDKYCYEKLNIEGTEKGNCGKDKDTWIQCNKRDVLCGYLLCTNIGNIPRLGELDGEITSTLVVQQGRTLNCSGGHVKLEEDVDLGYVEDGTPCGPQMMCLEHRCLPVASFNFSTCLSSKEGTICSGNGVCSNELKCVCNRHWIGSDCNTYFPHNDDAKTGITLSGNGVAGTNIIIGIIAGTILVLALILGITAWGYKNYREQRQLPQGDYVKKPGDGDSFYSDIPPGVSTNSASSSKKRSNGLSHSWSERIPDTKHISDICENGRPRSNSWQGNLGGNKKKIRGKRFRPRSNSTETLSPAKSPSSSTGSIASSRKYPYPMPPLPDEDKKVNRQSARLWETSI</sequence>
<protein>
    <recommendedName>
        <fullName>Disintegrin and metalloproteinase domain-containing protein 22</fullName>
        <shortName>ADAM 22</shortName>
    </recommendedName>
    <alternativeName>
        <fullName>Metalloproteinase-disintegrin ADAM22-3</fullName>
    </alternativeName>
    <alternativeName>
        <fullName>Metalloproteinase-like, disintegrin-like, and cysteine-rich protein 2</fullName>
    </alternativeName>
</protein>
<evidence type="ECO:0000250" key="1"/>
<evidence type="ECO:0000250" key="2">
    <source>
        <dbReference type="UniProtKB" id="Q9R1V6"/>
    </source>
</evidence>
<evidence type="ECO:0000255" key="3"/>
<evidence type="ECO:0000255" key="4">
    <source>
        <dbReference type="PROSITE-ProRule" id="PRU00068"/>
    </source>
</evidence>
<evidence type="ECO:0000255" key="5">
    <source>
        <dbReference type="PROSITE-ProRule" id="PRU00276"/>
    </source>
</evidence>
<evidence type="ECO:0000256" key="6">
    <source>
        <dbReference type="SAM" id="MobiDB-lite"/>
    </source>
</evidence>
<evidence type="ECO:0000269" key="7">
    <source>
    </source>
</evidence>
<evidence type="ECO:0000269" key="8">
    <source>
    </source>
</evidence>
<evidence type="ECO:0000269" key="9">
    <source>
    </source>
</evidence>
<evidence type="ECO:0000269" key="10">
    <source>
    </source>
</evidence>
<evidence type="ECO:0000269" key="11">
    <source>
    </source>
</evidence>
<evidence type="ECO:0000269" key="12">
    <source>
    </source>
</evidence>
<evidence type="ECO:0000269" key="13">
    <source ref="3"/>
</evidence>
<evidence type="ECO:0000303" key="14">
    <source>
    </source>
</evidence>
<evidence type="ECO:0000303" key="15">
    <source>
    </source>
</evidence>
<evidence type="ECO:0000303" key="16">
    <source ref="3"/>
</evidence>
<evidence type="ECO:0000305" key="17"/>
<evidence type="ECO:0007744" key="18">
    <source>
    </source>
</evidence>
<evidence type="ECO:0007829" key="19">
    <source>
        <dbReference type="PDB" id="3G5C"/>
    </source>
</evidence>
<evidence type="ECO:0007829" key="20">
    <source>
        <dbReference type="PDB" id="5Y2Z"/>
    </source>
</evidence>
<evidence type="ECO:0007829" key="21">
    <source>
        <dbReference type="PDB" id="8HQ2"/>
    </source>
</evidence>
<evidence type="ECO:0007829" key="22">
    <source>
        <dbReference type="PDB" id="8Y6B"/>
    </source>
</evidence>
<proteinExistence type="evidence at protein level"/>
<organism>
    <name type="scientific">Homo sapiens</name>
    <name type="common">Human</name>
    <dbReference type="NCBI Taxonomy" id="9606"/>
    <lineage>
        <taxon>Eukaryota</taxon>
        <taxon>Metazoa</taxon>
        <taxon>Chordata</taxon>
        <taxon>Craniata</taxon>
        <taxon>Vertebrata</taxon>
        <taxon>Euteleostomi</taxon>
        <taxon>Mammalia</taxon>
        <taxon>Eutheria</taxon>
        <taxon>Euarchontoglires</taxon>
        <taxon>Primates</taxon>
        <taxon>Haplorrhini</taxon>
        <taxon>Catarrhini</taxon>
        <taxon>Hominidae</taxon>
        <taxon>Homo</taxon>
    </lineage>
</organism>
<comment type="function">
    <text evidence="8 9 10 11">Probable ligand for integrin in the brain. This is a non catalytic metalloprotease-like protein (PubMed:19692335). Involved in regulation of cell adhesion and spreading and in inhibition of cell proliferation. Neuronal receptor for LGI1.</text>
</comment>
<comment type="subunit">
    <text evidence="2 8 9 12">Interacts with LGI1 (PubMed:27066583). Interacts with DLG4/PSD95 (PubMed:27066583). Also binds LGI4 (By similarity). Interacts with KCNA2 and DLG2 (By similarity). Interacts with ADAM11 (By similarity). Interacts (via C-terminus) with YWHAB/14-3-3 beta (PubMed:15882968). Interacts (via C-terminus) with YWHAZ/14-3-3 zeta (PubMed:12589811).</text>
</comment>
<comment type="interaction">
    <interactant intactId="EBI-1567236">
        <id>Q9P0K1</id>
    </interactant>
    <interactant intactId="EBI-357345">
        <id>Q14160</id>
        <label>SCRIB</label>
    </interactant>
    <organismsDiffer>false</organismsDiffer>
    <experiments>3</experiments>
</comment>
<comment type="interaction">
    <interactant intactId="EBI-1567236">
        <id>Q9P0K1</id>
    </interactant>
    <interactant intactId="EBI-347088">
        <id>P63104</id>
        <label>YWHAZ</label>
    </interactant>
    <organismsDiffer>false</organismsDiffer>
    <experiments>3</experiments>
</comment>
<comment type="interaction">
    <interactant intactId="EBI-1567267">
        <id>Q9P0K1-3</id>
    </interactant>
    <interactant intactId="EBI-359815">
        <id>P31946</id>
        <label>YWHAB</label>
    </interactant>
    <organismsDiffer>false</organismsDiffer>
    <experiments>2</experiments>
</comment>
<comment type="interaction">
    <interactant intactId="EBI-1567267">
        <id>Q9P0K1-3</id>
    </interactant>
    <interactant intactId="EBI-359854">
        <id>P27348</id>
        <label>YWHAQ</label>
    </interactant>
    <organismsDiffer>false</organismsDiffer>
    <experiments>2</experiments>
</comment>
<comment type="interaction">
    <interactant intactId="EBI-1567267">
        <id>Q9P0K1-3</id>
    </interactant>
    <interactant intactId="EBI-347088">
        <id>P63104</id>
        <label>YWHAZ</label>
    </interactant>
    <organismsDiffer>false</organismsDiffer>
    <experiments>3</experiments>
</comment>
<comment type="subcellular location">
    <subcellularLocation>
        <location evidence="12">Cell membrane</location>
        <topology evidence="17">Single-pass type I membrane protein</topology>
    </subcellularLocation>
    <subcellularLocation>
        <location evidence="2">Cell projection</location>
        <location evidence="2">Axon</location>
    </subcellularLocation>
</comment>
<comment type="alternative products">
    <event type="alternative splicing"/>
    <isoform>
        <id>Q9P0K1-1</id>
        <name>1</name>
        <name>Epsilon</name>
        <sequence type="displayed"/>
    </isoform>
    <isoform>
        <id>Q9P0K1-2</id>
        <name>2</name>
        <name>Delta</name>
        <sequence type="described" ref="VSP_005482 VSP_005484"/>
    </isoform>
    <isoform>
        <id>Q9P0K1-3</id>
        <name>3</name>
        <name>Alpha</name>
        <sequence type="described" ref="VSP_005483"/>
    </isoform>
    <isoform>
        <id>Q9P0K1-4</id>
        <name>4</name>
        <name>Beta</name>
        <sequence type="described" ref="VSP_005482 VSP_005483"/>
    </isoform>
    <isoform>
        <id>Q9P0K1-5</id>
        <name>5</name>
        <sequence type="described" ref="VSP_005482"/>
    </isoform>
</comment>
<comment type="tissue specificity">
    <text evidence="10">Highly expressed in the brain and in some high-grade but not low-grade gliomas. Detected slightly or not at all in other tissues.</text>
</comment>
<comment type="PTM">
    <text evidence="1">The precursor is cleaved by a furin endopeptidase.</text>
</comment>
<comment type="disease" evidence="12">
    <disease id="DI-05227">
        <name>Developmental and epileptic encephalopathy 61</name>
        <acronym>DEE61</acronym>
        <description>A form of epileptic encephalopathy, a heterogeneous group of severe early-onset epilepsies characterized by refractory seizures, neurodevelopmental impairment, and poor prognosis. Development is normal prior to seizure onset, after which cognitive and motor delays become apparent. DEE61 is an autosomal recessive condition characterized by onset of seizures in infancy.</description>
        <dbReference type="MIM" id="617933"/>
    </disease>
    <text>The disease is caused by variants affecting the gene represented in this entry.</text>
</comment>
<comment type="miscellaneous">
    <molecule>Isoform 2</molecule>
    <text evidence="17">May be produced at very low levels due to a premature stop codon in the mRNA, leading to nonsense-mediated mRNA decay.</text>
</comment>
<reference key="1">
    <citation type="journal article" date="1998" name="Biochem. J.">
        <title>Metalloproteinase-like, disintegrin-like, cysteine-rich proteins MDC2 and MDC3: novel human cellular disintegrins highly expressed in the brain.</title>
        <authorList>
            <person name="Sagane K."/>
            <person name="Ohya Y."/>
            <person name="Hasegawa Y."/>
            <person name="Tanaka I."/>
        </authorList>
    </citation>
    <scope>NUCLEOTIDE SEQUENCE [MRNA] (ISOFORMS 3 AND 4)</scope>
    <source>
        <tissue>Brain</tissue>
    </source>
</reference>
<reference key="2">
    <citation type="journal article" date="2000" name="Jpn. J. Cancer Res.">
        <title>The specific expression of three novel splice variant forms of human metalloprotease-like disintegrin-like cysteine-rich protein 2 gene in brain tissues and gliomas.</title>
        <authorList>
            <person name="Harada T."/>
            <person name="Nishie A."/>
            <person name="Torigoe K."/>
            <person name="Ikezaki K."/>
            <person name="Shono T."/>
            <person name="Maehara Y."/>
            <person name="Kuwano M."/>
            <person name="Wada M."/>
        </authorList>
    </citation>
    <scope>NUCLEOTIDE SEQUENCE [MRNA] (ISOFORMS 1 AND 2)</scope>
</reference>
<reference key="3">
    <citation type="submission" date="2000-01" db="EMBL/GenBank/DDBJ databases">
        <title>Isolation and tissue specific expression of novel ADAM family from 7q21.1 region.</title>
        <authorList>
            <person name="Wada M."/>
            <person name="Torigoe K."/>
            <person name="Harada T."/>
            <person name="Kuwano M."/>
        </authorList>
    </citation>
    <scope>NUCLEOTIDE SEQUENCE [MRNA] (ISOFORM 5)</scope>
    <scope>VARIANT ARG-81</scope>
    <source>
        <tissue>Brain</tissue>
    </source>
</reference>
<reference key="4">
    <citation type="journal article" date="2003" name="Nature">
        <title>The DNA sequence of human chromosome 7.</title>
        <authorList>
            <person name="Hillier L.W."/>
            <person name="Fulton R.S."/>
            <person name="Fulton L.A."/>
            <person name="Graves T.A."/>
            <person name="Pepin K.H."/>
            <person name="Wagner-McPherson C."/>
            <person name="Layman D."/>
            <person name="Maas J."/>
            <person name="Jaeger S."/>
            <person name="Walker R."/>
            <person name="Wylie K."/>
            <person name="Sekhon M."/>
            <person name="Becker M.C."/>
            <person name="O'Laughlin M.D."/>
            <person name="Schaller M.E."/>
            <person name="Fewell G.A."/>
            <person name="Delehaunty K.D."/>
            <person name="Miner T.L."/>
            <person name="Nash W.E."/>
            <person name="Cordes M."/>
            <person name="Du H."/>
            <person name="Sun H."/>
            <person name="Edwards J."/>
            <person name="Bradshaw-Cordum H."/>
            <person name="Ali J."/>
            <person name="Andrews S."/>
            <person name="Isak A."/>
            <person name="Vanbrunt A."/>
            <person name="Nguyen C."/>
            <person name="Du F."/>
            <person name="Lamar B."/>
            <person name="Courtney L."/>
            <person name="Kalicki J."/>
            <person name="Ozersky P."/>
            <person name="Bielicki L."/>
            <person name="Scott K."/>
            <person name="Holmes A."/>
            <person name="Harkins R."/>
            <person name="Harris A."/>
            <person name="Strong C.M."/>
            <person name="Hou S."/>
            <person name="Tomlinson C."/>
            <person name="Dauphin-Kohlberg S."/>
            <person name="Kozlowicz-Reilly A."/>
            <person name="Leonard S."/>
            <person name="Rohlfing T."/>
            <person name="Rock S.M."/>
            <person name="Tin-Wollam A.-M."/>
            <person name="Abbott A."/>
            <person name="Minx P."/>
            <person name="Maupin R."/>
            <person name="Strowmatt C."/>
            <person name="Latreille P."/>
            <person name="Miller N."/>
            <person name="Johnson D."/>
            <person name="Murray J."/>
            <person name="Woessner J.P."/>
            <person name="Wendl M.C."/>
            <person name="Yang S.-P."/>
            <person name="Schultz B.R."/>
            <person name="Wallis J.W."/>
            <person name="Spieth J."/>
            <person name="Bieri T.A."/>
            <person name="Nelson J.O."/>
            <person name="Berkowicz N."/>
            <person name="Wohldmann P.E."/>
            <person name="Cook L.L."/>
            <person name="Hickenbotham M.T."/>
            <person name="Eldred J."/>
            <person name="Williams D."/>
            <person name="Bedell J.A."/>
            <person name="Mardis E.R."/>
            <person name="Clifton S.W."/>
            <person name="Chissoe S.L."/>
            <person name="Marra M.A."/>
            <person name="Raymond C."/>
            <person name="Haugen E."/>
            <person name="Gillett W."/>
            <person name="Zhou Y."/>
            <person name="James R."/>
            <person name="Phelps K."/>
            <person name="Iadanoto S."/>
            <person name="Bubb K."/>
            <person name="Simms E."/>
            <person name="Levy R."/>
            <person name="Clendenning J."/>
            <person name="Kaul R."/>
            <person name="Kent W.J."/>
            <person name="Furey T.S."/>
            <person name="Baertsch R.A."/>
            <person name="Brent M.R."/>
            <person name="Keibler E."/>
            <person name="Flicek P."/>
            <person name="Bork P."/>
            <person name="Suyama M."/>
            <person name="Bailey J.A."/>
            <person name="Portnoy M.E."/>
            <person name="Torrents D."/>
            <person name="Chinwalla A.T."/>
            <person name="Gish W.R."/>
            <person name="Eddy S.R."/>
            <person name="McPherson J.D."/>
            <person name="Olson M.V."/>
            <person name="Eichler E.E."/>
            <person name="Green E.D."/>
            <person name="Waterston R.H."/>
            <person name="Wilson R.K."/>
        </authorList>
    </citation>
    <scope>NUCLEOTIDE SEQUENCE [LARGE SCALE GENOMIC DNA]</scope>
</reference>
<reference key="5">
    <citation type="journal article" date="1999" name="Gene">
        <title>The identification of seven metalloproteinase-disintegrin (ADAM) genes from genomic libraries.</title>
        <authorList>
            <person name="Poindexter K."/>
            <person name="Nelson N."/>
            <person name="DuBose R.F."/>
            <person name="Black R.A."/>
            <person name="Cerretti D.P."/>
        </authorList>
    </citation>
    <scope>NUCLEOTIDE SEQUENCE [MRNA] OF 40-906 (ISOFORM 1)</scope>
    <scope>VARIANT ARG-81</scope>
    <source>
        <tissue>Cerebellum</tissue>
    </source>
</reference>
<reference key="6">
    <citation type="journal article" date="2003" name="Biochem. Biophys. Res. Commun.">
        <title>The interaction between ADAM 22 and 14-3-3zeta: regulation of cell adhesion and spreading.</title>
        <authorList>
            <person name="Zhu P."/>
            <person name="Sun Y."/>
            <person name="Xu R."/>
            <person name="Sang Y."/>
            <person name="Zhao J."/>
            <person name="Liu G."/>
            <person name="Cai L."/>
            <person name="Li C."/>
            <person name="Zhao S."/>
        </authorList>
    </citation>
    <scope>FUNCTION</scope>
    <scope>INTERACTION WITH YWHAZ</scope>
    <scope>MUTAGENESIS OF SER-834 AND SER-857</scope>
</reference>
<reference key="7">
    <citation type="journal article" date="2004" name="Genome Biol.">
        <title>An unappreciated role for RNA surveillance.</title>
        <authorList>
            <person name="Hillman R.T."/>
            <person name="Green R.E."/>
            <person name="Brenner S.E."/>
        </authorList>
    </citation>
    <scope>SPLICE ISOFORM(S) THAT ARE POTENTIAL NMD TARGET(S)</scope>
</reference>
<reference key="8">
    <citation type="journal article" date="2005" name="Biochem. Biophys. Res. Commun.">
        <title>ADAM22 plays an important role in cell adhesion and spreading with the assistance of 14-3-3.</title>
        <authorList>
            <person name="Zhu P."/>
            <person name="Sang Y."/>
            <person name="Xu H."/>
            <person name="Zhao J."/>
            <person name="Xu R."/>
            <person name="Sun Y."/>
            <person name="Xu T."/>
            <person name="Wang X."/>
            <person name="Chen L."/>
            <person name="Feng H."/>
            <person name="Li C."/>
            <person name="Zhao S."/>
        </authorList>
    </citation>
    <scope>FUNCTION</scope>
    <scope>INTERACTION WITH YWHAB</scope>
    <scope>MUTAGENESIS OF SER-834 AND SER-857</scope>
</reference>
<reference key="9">
    <citation type="journal article" date="2006" name="Neurosurgery">
        <title>ADAM22, expressed in normal brain but not in high-grade gliomas, inhibits cellular proliferation via the disintegrin domain.</title>
        <authorList>
            <person name="D'Abaco G.M."/>
            <person name="Ng K."/>
            <person name="Paradiso L."/>
            <person name="Godde N.J."/>
            <person name="Kaye A."/>
            <person name="Novak U."/>
        </authorList>
    </citation>
    <scope>FUNCTION</scope>
    <scope>TISSUE SPECIFICITY</scope>
</reference>
<reference key="10">
    <citation type="journal article" date="2011" name="Sci. Signal.">
        <title>System-wide temporal characterization of the proteome and phosphoproteome of human embryonic stem cell differentiation.</title>
        <authorList>
            <person name="Rigbolt K.T."/>
            <person name="Prokhorova T.A."/>
            <person name="Akimov V."/>
            <person name="Henningsen J."/>
            <person name="Johansen P.T."/>
            <person name="Kratchmarova I."/>
            <person name="Kassem M."/>
            <person name="Mann M."/>
            <person name="Olsen J.V."/>
            <person name="Blagoev B."/>
        </authorList>
    </citation>
    <scope>PHOSPHORYLATION [LARGE SCALE ANALYSIS] AT SER-834</scope>
    <scope>IDENTIFICATION BY MASS SPECTROMETRY [LARGE SCALE ANALYSIS]</scope>
</reference>
<reference key="11">
    <citation type="journal article" date="2016" name="Neurol. Genet.">
        <title>Dysfunctional ADAM22 implicated in progressive encephalopathy with cortical atrophy and epilepsy.</title>
        <authorList>
            <person name="Muona M."/>
            <person name="Fukata Y."/>
            <person name="Anttonen A.K."/>
            <person name="Laari A."/>
            <person name="Palotie A."/>
            <person name="Pihko H."/>
            <person name="Loennqvist T."/>
            <person name="Valanne L."/>
            <person name="Somer M."/>
            <person name="Fukata M."/>
            <person name="Lehesjoki A.E."/>
        </authorList>
    </citation>
    <scope>INVOLVEMENT IN DEE61</scope>
    <scope>VARIANT DEE61 TYR-401</scope>
    <scope>INTERACTION WITH LGI1 AND DLG4</scope>
    <scope>SUBCELLULAR LOCATION</scope>
    <scope>CHARACTERIZATION OF VARIANT DEE61 TYR-401</scope>
</reference>
<reference key="12">
    <citation type="journal article" date="2009" name="J. Biol. Chem.">
        <title>Structural characterization of the ectodomain of a disintegrin and metalloproteinase-22 (ADAM22), a neural adhesion receptor instead of metalloproteinase: insights on ADAM function.</title>
        <authorList>
            <person name="Liu H."/>
            <person name="Shim A.H."/>
            <person name="He X."/>
        </authorList>
    </citation>
    <scope>X-RAY CRYSTALLOGRAPHY (2.36 ANGSTROMS) OF 233-736</scope>
    <scope>GLYCOSYLATION AT ASN-519; ASN-634 AND ASN-675</scope>
    <scope>DISULFIDE BONDS</scope>
    <scope>FUNCTION</scope>
</reference>